<reference key="1">
    <citation type="journal article" date="2008" name="J. Biotechnol.">
        <title>The genome of Xanthomonas campestris pv. campestris B100 and its use for the reconstruction of metabolic pathways involved in xanthan biosynthesis.</title>
        <authorList>
            <person name="Vorhoelter F.-J."/>
            <person name="Schneiker S."/>
            <person name="Goesmann A."/>
            <person name="Krause L."/>
            <person name="Bekel T."/>
            <person name="Kaiser O."/>
            <person name="Linke B."/>
            <person name="Patschkowski T."/>
            <person name="Rueckert C."/>
            <person name="Schmid J."/>
            <person name="Sidhu V.K."/>
            <person name="Sieber V."/>
            <person name="Tauch A."/>
            <person name="Watt S.A."/>
            <person name="Weisshaar B."/>
            <person name="Becker A."/>
            <person name="Niehaus K."/>
            <person name="Puehler A."/>
        </authorList>
    </citation>
    <scope>NUCLEOTIDE SEQUENCE [LARGE SCALE GENOMIC DNA]</scope>
    <source>
        <strain>B100</strain>
    </source>
</reference>
<keyword id="KW-0028">Amino-acid biosynthesis</keyword>
<keyword id="KW-0223">Dioxygenase</keyword>
<keyword id="KW-0408">Iron</keyword>
<keyword id="KW-0479">Metal-binding</keyword>
<keyword id="KW-0486">Methionine biosynthesis</keyword>
<keyword id="KW-0533">Nickel</keyword>
<keyword id="KW-0560">Oxidoreductase</keyword>
<evidence type="ECO:0000255" key="1">
    <source>
        <dbReference type="HAMAP-Rule" id="MF_01682"/>
    </source>
</evidence>
<evidence type="ECO:0000256" key="2">
    <source>
        <dbReference type="SAM" id="MobiDB-lite"/>
    </source>
</evidence>
<sequence length="188" mass="21402">MSRLRIFADSNPTTPHFDSRDGEQIATELRKIGVTFERWHASQPVEPGASPEQVMAAYRADIDRISAERGFKTVDVVSIAPDNPKREEMRAKFLDEHFHKEDEVRFFVAGSGLFTLHVDAQVYEIECVKDDLIAVPDSTLHWFDMGPEPHFVAIRFFTEPDGWVGHFTGTEIAKQFPRYAPEKPPKAS</sequence>
<gene>
    <name evidence="1" type="primary">mtnD</name>
    <name type="ordered locus">xcc-b100_2106</name>
</gene>
<dbReference type="EC" id="1.13.11.54" evidence="1"/>
<dbReference type="EC" id="1.13.11.53" evidence="1"/>
<dbReference type="EMBL" id="AM920689">
    <property type="protein sequence ID" value="CAP51459.1"/>
    <property type="molecule type" value="Genomic_DNA"/>
</dbReference>
<dbReference type="SMR" id="B0RSM4"/>
<dbReference type="KEGG" id="xca:xcc-b100_2106"/>
<dbReference type="HOGENOM" id="CLU_125400_0_0_6"/>
<dbReference type="UniPathway" id="UPA00904">
    <property type="reaction ID" value="UER00878"/>
</dbReference>
<dbReference type="Proteomes" id="UP000001188">
    <property type="component" value="Chromosome"/>
</dbReference>
<dbReference type="GO" id="GO:0010308">
    <property type="term" value="F:acireductone dioxygenase (Ni2+-requiring) activity"/>
    <property type="evidence" value="ECO:0007669"/>
    <property type="project" value="UniProtKB-UniRule"/>
</dbReference>
<dbReference type="GO" id="GO:0010309">
    <property type="term" value="F:acireductone dioxygenase [iron(II)-requiring] activity"/>
    <property type="evidence" value="ECO:0007669"/>
    <property type="project" value="UniProtKB-UniRule"/>
</dbReference>
<dbReference type="GO" id="GO:0005506">
    <property type="term" value="F:iron ion binding"/>
    <property type="evidence" value="ECO:0007669"/>
    <property type="project" value="UniProtKB-UniRule"/>
</dbReference>
<dbReference type="GO" id="GO:0016151">
    <property type="term" value="F:nickel cation binding"/>
    <property type="evidence" value="ECO:0007669"/>
    <property type="project" value="UniProtKB-UniRule"/>
</dbReference>
<dbReference type="GO" id="GO:0019509">
    <property type="term" value="P:L-methionine salvage from methylthioadenosine"/>
    <property type="evidence" value="ECO:0007669"/>
    <property type="project" value="UniProtKB-UniRule"/>
</dbReference>
<dbReference type="GO" id="GO:0019284">
    <property type="term" value="P:L-methionine salvage from S-adenosylmethionine"/>
    <property type="evidence" value="ECO:0007669"/>
    <property type="project" value="InterPro"/>
</dbReference>
<dbReference type="CDD" id="cd02232">
    <property type="entry name" value="cupin_ARD"/>
    <property type="match status" value="1"/>
</dbReference>
<dbReference type="FunFam" id="2.60.120.10:FF:000056">
    <property type="entry name" value="Acireductone dioxygenase"/>
    <property type="match status" value="1"/>
</dbReference>
<dbReference type="Gene3D" id="2.60.120.10">
    <property type="entry name" value="Jelly Rolls"/>
    <property type="match status" value="1"/>
</dbReference>
<dbReference type="HAMAP" id="MF_01682">
    <property type="entry name" value="Salvage_MtnD"/>
    <property type="match status" value="1"/>
</dbReference>
<dbReference type="InterPro" id="IPR004313">
    <property type="entry name" value="ARD"/>
</dbReference>
<dbReference type="InterPro" id="IPR023956">
    <property type="entry name" value="ARD_bac"/>
</dbReference>
<dbReference type="InterPro" id="IPR014710">
    <property type="entry name" value="RmlC-like_jellyroll"/>
</dbReference>
<dbReference type="InterPro" id="IPR011051">
    <property type="entry name" value="RmlC_Cupin_sf"/>
</dbReference>
<dbReference type="PANTHER" id="PTHR23418">
    <property type="entry name" value="ACIREDUCTONE DIOXYGENASE"/>
    <property type="match status" value="1"/>
</dbReference>
<dbReference type="PANTHER" id="PTHR23418:SF0">
    <property type="entry name" value="ACIREDUCTONE DIOXYGENASE"/>
    <property type="match status" value="1"/>
</dbReference>
<dbReference type="Pfam" id="PF03079">
    <property type="entry name" value="ARD"/>
    <property type="match status" value="1"/>
</dbReference>
<dbReference type="SUPFAM" id="SSF51182">
    <property type="entry name" value="RmlC-like cupins"/>
    <property type="match status" value="1"/>
</dbReference>
<accession>B0RSM4</accession>
<protein>
    <recommendedName>
        <fullName evidence="1">Acireductone dioxygenase</fullName>
    </recommendedName>
    <alternativeName>
        <fullName evidence="1">1,2-dihydroxy-3-keto-5-methylthiopentene dioxygenase</fullName>
        <shortName evidence="1">DHK-MTPene dioxygenase</shortName>
    </alternativeName>
    <alternativeName>
        <fullName evidence="1">Acireductone dioxygenase (Fe(2+)-requiring)</fullName>
        <shortName evidence="1">ARD'</shortName>
        <shortName evidence="1">Fe-ARD</shortName>
        <ecNumber evidence="1">1.13.11.54</ecNumber>
    </alternativeName>
    <alternativeName>
        <fullName evidence="1">Acireductone dioxygenase (Ni(2+)-requiring)</fullName>
        <shortName evidence="1">ARD</shortName>
        <shortName evidence="1">Ni-ARD</shortName>
        <ecNumber evidence="1">1.13.11.53</ecNumber>
    </alternativeName>
</protein>
<feature type="chain" id="PRO_0000359249" description="Acireductone dioxygenase">
    <location>
        <begin position="1"/>
        <end position="188"/>
    </location>
</feature>
<feature type="region of interest" description="Disordered" evidence="2">
    <location>
        <begin position="1"/>
        <end position="20"/>
    </location>
</feature>
<feature type="binding site" evidence="1">
    <location>
        <position position="97"/>
    </location>
    <ligand>
        <name>Fe(2+)</name>
        <dbReference type="ChEBI" id="CHEBI:29033"/>
    </ligand>
</feature>
<feature type="binding site" evidence="1">
    <location>
        <position position="97"/>
    </location>
    <ligand>
        <name>Ni(2+)</name>
        <dbReference type="ChEBI" id="CHEBI:49786"/>
    </ligand>
</feature>
<feature type="binding site" evidence="1">
    <location>
        <position position="99"/>
    </location>
    <ligand>
        <name>Fe(2+)</name>
        <dbReference type="ChEBI" id="CHEBI:29033"/>
    </ligand>
</feature>
<feature type="binding site" evidence="1">
    <location>
        <position position="99"/>
    </location>
    <ligand>
        <name>Ni(2+)</name>
        <dbReference type="ChEBI" id="CHEBI:49786"/>
    </ligand>
</feature>
<feature type="binding site" evidence="1">
    <location>
        <position position="103"/>
    </location>
    <ligand>
        <name>Fe(2+)</name>
        <dbReference type="ChEBI" id="CHEBI:29033"/>
    </ligand>
</feature>
<feature type="binding site" evidence="1">
    <location>
        <position position="103"/>
    </location>
    <ligand>
        <name>Ni(2+)</name>
        <dbReference type="ChEBI" id="CHEBI:49786"/>
    </ligand>
</feature>
<feature type="binding site" evidence="1">
    <location>
        <position position="141"/>
    </location>
    <ligand>
        <name>Fe(2+)</name>
        <dbReference type="ChEBI" id="CHEBI:29033"/>
    </ligand>
</feature>
<feature type="binding site" evidence="1">
    <location>
        <position position="141"/>
    </location>
    <ligand>
        <name>Ni(2+)</name>
        <dbReference type="ChEBI" id="CHEBI:49786"/>
    </ligand>
</feature>
<feature type="site" description="May play a role in metal incorporation in vivo" evidence="1">
    <location>
        <position position="96"/>
    </location>
</feature>
<feature type="site" description="May play a role in transmitting local conformational changes" evidence="1">
    <location>
        <position position="102"/>
    </location>
</feature>
<feature type="site" description="Important to generate the dianion" evidence="1">
    <location>
        <position position="105"/>
    </location>
</feature>
<comment type="function">
    <text evidence="1">Catalyzes 2 different reactions between oxygen and the acireductone 1,2-dihydroxy-3-keto-5-methylthiopentene (DHK-MTPene) depending upon the metal bound in the active site. Fe-containing acireductone dioxygenase (Fe-ARD) produces formate and 2-keto-4-methylthiobutyrate (KMTB), the alpha-ketoacid precursor of methionine in the methionine recycle pathway. Ni-containing acireductone dioxygenase (Ni-ARD) produces methylthiopropionate, carbon monoxide and formate, and does not lie on the methionine recycle pathway.</text>
</comment>
<comment type="catalytic activity">
    <reaction evidence="1">
        <text>1,2-dihydroxy-5-(methylsulfanyl)pent-1-en-3-one + O2 = 3-(methylsulfanyl)propanoate + CO + formate + 2 H(+)</text>
        <dbReference type="Rhea" id="RHEA:14161"/>
        <dbReference type="ChEBI" id="CHEBI:15378"/>
        <dbReference type="ChEBI" id="CHEBI:15379"/>
        <dbReference type="ChEBI" id="CHEBI:15740"/>
        <dbReference type="ChEBI" id="CHEBI:17245"/>
        <dbReference type="ChEBI" id="CHEBI:49016"/>
        <dbReference type="ChEBI" id="CHEBI:49252"/>
        <dbReference type="EC" id="1.13.11.53"/>
    </reaction>
</comment>
<comment type="catalytic activity">
    <reaction evidence="1">
        <text>1,2-dihydroxy-5-(methylsulfanyl)pent-1-en-3-one + O2 = 4-methylsulfanyl-2-oxobutanoate + formate + 2 H(+)</text>
        <dbReference type="Rhea" id="RHEA:24504"/>
        <dbReference type="ChEBI" id="CHEBI:15378"/>
        <dbReference type="ChEBI" id="CHEBI:15379"/>
        <dbReference type="ChEBI" id="CHEBI:15740"/>
        <dbReference type="ChEBI" id="CHEBI:16723"/>
        <dbReference type="ChEBI" id="CHEBI:49252"/>
        <dbReference type="EC" id="1.13.11.54"/>
    </reaction>
</comment>
<comment type="cofactor">
    <cofactor evidence="1">
        <name>Fe(2+)</name>
        <dbReference type="ChEBI" id="CHEBI:29033"/>
    </cofactor>
    <text evidence="1">Binds 1 Fe(2+) cation per monomer.</text>
</comment>
<comment type="cofactor">
    <cofactor evidence="1">
        <name>Ni(2+)</name>
        <dbReference type="ChEBI" id="CHEBI:49786"/>
    </cofactor>
    <text evidence="1">Binds 1 nickel ion per monomer.</text>
</comment>
<comment type="pathway">
    <text evidence="1">Amino-acid biosynthesis; L-methionine biosynthesis via salvage pathway; L-methionine from S-methyl-5-thio-alpha-D-ribose 1-phosphate: step 5/6.</text>
</comment>
<comment type="subunit">
    <text evidence="1">Monomer.</text>
</comment>
<comment type="similarity">
    <text evidence="1">Belongs to the acireductone dioxygenase (ARD) family.</text>
</comment>
<name>MTND_XANCB</name>
<proteinExistence type="inferred from homology"/>
<organism>
    <name type="scientific">Xanthomonas campestris pv. campestris (strain B100)</name>
    <dbReference type="NCBI Taxonomy" id="509169"/>
    <lineage>
        <taxon>Bacteria</taxon>
        <taxon>Pseudomonadati</taxon>
        <taxon>Pseudomonadota</taxon>
        <taxon>Gammaproteobacteria</taxon>
        <taxon>Lysobacterales</taxon>
        <taxon>Lysobacteraceae</taxon>
        <taxon>Xanthomonas</taxon>
    </lineage>
</organism>